<evidence type="ECO:0000255" key="1">
    <source>
        <dbReference type="HAMAP-Rule" id="MF_00081"/>
    </source>
</evidence>
<comment type="function">
    <text evidence="1">Negative regulator of class I heat shock genes (grpE-dnaK-dnaJ and groELS operons). Prevents heat-shock induction of these operons.</text>
</comment>
<comment type="similarity">
    <text evidence="1">Belongs to the HrcA family.</text>
</comment>
<reference key="1">
    <citation type="journal article" date="2011" name="J. Bacteriol.">
        <title>Genome sequence of lineage III Listeria monocytogenes strain HCC23.</title>
        <authorList>
            <person name="Steele C.L."/>
            <person name="Donaldson J.R."/>
            <person name="Paul D."/>
            <person name="Banes M.M."/>
            <person name="Arick T."/>
            <person name="Bridges S.M."/>
            <person name="Lawrence M.L."/>
        </authorList>
    </citation>
    <scope>NUCLEOTIDE SEQUENCE [LARGE SCALE GENOMIC DNA]</scope>
    <source>
        <strain>HCC23</strain>
    </source>
</reference>
<protein>
    <recommendedName>
        <fullName evidence="1">Heat-inducible transcription repressor HrcA</fullName>
    </recommendedName>
</protein>
<proteinExistence type="inferred from homology"/>
<name>HRCA_LISMH</name>
<feature type="chain" id="PRO_1000118305" description="Heat-inducible transcription repressor HrcA">
    <location>
        <begin position="1"/>
        <end position="345"/>
    </location>
</feature>
<accession>B8DE36</accession>
<organism>
    <name type="scientific">Listeria monocytogenes serotype 4a (strain HCC23)</name>
    <dbReference type="NCBI Taxonomy" id="552536"/>
    <lineage>
        <taxon>Bacteria</taxon>
        <taxon>Bacillati</taxon>
        <taxon>Bacillota</taxon>
        <taxon>Bacilli</taxon>
        <taxon>Bacillales</taxon>
        <taxon>Listeriaceae</taxon>
        <taxon>Listeria</taxon>
    </lineage>
</organism>
<sequence length="345" mass="39681">MLTERQLLIFRAIIDHFTWTIQPVGSKNLLKEKGLPYSSATIRNEMGVLEEYGFIEKTHSSSGRVPSEKGYRFYVDYLLQPKKLDKSDRQMIRSFFSENYYEMEGLIQNSALMLSDLTNYTSILLGPEATKNHLSGFRFVPINNFQAMLILITDQGHVDNHLVTIPEGTTLSDIERMVNILNERLVGLSLDDLKVQIPMEVKELLGKHVRNYESFMHVFSDSFAQASQQKVYFGGKTNILNQPEFHDINKVREMLHLMEEEQDVYELFRDIPDGLQVKIGRENNNSLMEDCSIITATYNIAGERVGGIVLLGPTRMEYSRMMGLVDVMSRDLTDVLTKLYRDNQN</sequence>
<gene>
    <name evidence="1" type="primary">hrcA</name>
    <name type="ordered locus">LMHCC_1095</name>
</gene>
<dbReference type="EMBL" id="CP001175">
    <property type="protein sequence ID" value="ACK39443.1"/>
    <property type="molecule type" value="Genomic_DNA"/>
</dbReference>
<dbReference type="RefSeq" id="WP_003726026.1">
    <property type="nucleotide sequence ID" value="NC_011660.1"/>
</dbReference>
<dbReference type="SMR" id="B8DE36"/>
<dbReference type="KEGG" id="lmh:LMHCC_1095"/>
<dbReference type="HOGENOM" id="CLU_050019_1_0_9"/>
<dbReference type="GO" id="GO:0003677">
    <property type="term" value="F:DNA binding"/>
    <property type="evidence" value="ECO:0007669"/>
    <property type="project" value="InterPro"/>
</dbReference>
<dbReference type="GO" id="GO:0045892">
    <property type="term" value="P:negative regulation of DNA-templated transcription"/>
    <property type="evidence" value="ECO:0007669"/>
    <property type="project" value="UniProtKB-UniRule"/>
</dbReference>
<dbReference type="FunFam" id="1.10.10.10:FF:000049">
    <property type="entry name" value="Heat-inducible transcription repressor HrcA"/>
    <property type="match status" value="1"/>
</dbReference>
<dbReference type="Gene3D" id="3.30.450.40">
    <property type="match status" value="1"/>
</dbReference>
<dbReference type="Gene3D" id="3.30.390.60">
    <property type="entry name" value="Heat-inducible transcription repressor hrca homolog, domain 3"/>
    <property type="match status" value="1"/>
</dbReference>
<dbReference type="Gene3D" id="1.10.10.10">
    <property type="entry name" value="Winged helix-like DNA-binding domain superfamily/Winged helix DNA-binding domain"/>
    <property type="match status" value="1"/>
</dbReference>
<dbReference type="HAMAP" id="MF_00081">
    <property type="entry name" value="HrcA"/>
    <property type="match status" value="1"/>
</dbReference>
<dbReference type="InterPro" id="IPR029016">
    <property type="entry name" value="GAF-like_dom_sf"/>
</dbReference>
<dbReference type="InterPro" id="IPR002571">
    <property type="entry name" value="HrcA"/>
</dbReference>
<dbReference type="InterPro" id="IPR021153">
    <property type="entry name" value="HrcA_C"/>
</dbReference>
<dbReference type="InterPro" id="IPR036388">
    <property type="entry name" value="WH-like_DNA-bd_sf"/>
</dbReference>
<dbReference type="InterPro" id="IPR036390">
    <property type="entry name" value="WH_DNA-bd_sf"/>
</dbReference>
<dbReference type="InterPro" id="IPR023120">
    <property type="entry name" value="WHTH_transcript_rep_HrcA_IDD"/>
</dbReference>
<dbReference type="NCBIfam" id="TIGR00331">
    <property type="entry name" value="hrcA"/>
    <property type="match status" value="1"/>
</dbReference>
<dbReference type="PANTHER" id="PTHR34824">
    <property type="entry name" value="HEAT-INDUCIBLE TRANSCRIPTION REPRESSOR HRCA"/>
    <property type="match status" value="1"/>
</dbReference>
<dbReference type="PANTHER" id="PTHR34824:SF1">
    <property type="entry name" value="HEAT-INDUCIBLE TRANSCRIPTION REPRESSOR HRCA"/>
    <property type="match status" value="1"/>
</dbReference>
<dbReference type="Pfam" id="PF01628">
    <property type="entry name" value="HrcA"/>
    <property type="match status" value="1"/>
</dbReference>
<dbReference type="PIRSF" id="PIRSF005485">
    <property type="entry name" value="HrcA"/>
    <property type="match status" value="1"/>
</dbReference>
<dbReference type="SUPFAM" id="SSF55781">
    <property type="entry name" value="GAF domain-like"/>
    <property type="match status" value="1"/>
</dbReference>
<dbReference type="SUPFAM" id="SSF46785">
    <property type="entry name" value="Winged helix' DNA-binding domain"/>
    <property type="match status" value="1"/>
</dbReference>
<keyword id="KW-0678">Repressor</keyword>
<keyword id="KW-0346">Stress response</keyword>
<keyword id="KW-0804">Transcription</keyword>
<keyword id="KW-0805">Transcription regulation</keyword>